<comment type="function">
    <text evidence="1">One of the primary rRNA binding proteins, it binds directly to 16S rRNA where it helps nucleate assembly of the platform of the 30S subunit by binding and bridging several RNA helices of the 16S rRNA.</text>
</comment>
<comment type="function">
    <text evidence="1">Forms an intersubunit bridge (bridge B4) with the 23S rRNA of the 50S subunit in the ribosome.</text>
</comment>
<comment type="subunit">
    <text evidence="1">Part of the 30S ribosomal subunit. Forms a bridge to the 50S subunit in the 70S ribosome, contacting the 23S rRNA.</text>
</comment>
<comment type="similarity">
    <text evidence="1">Belongs to the universal ribosomal protein uS15 family.</text>
</comment>
<evidence type="ECO:0000255" key="1">
    <source>
        <dbReference type="HAMAP-Rule" id="MF_01343"/>
    </source>
</evidence>
<evidence type="ECO:0000305" key="2"/>
<sequence>MSITAERKKELMGEFATAKGDTGSPEVQVAILSERIKNLTDHFKDHKKDNHSRRGLLALVSQRRSLLDYLKRKDDVRYQTLIEKLGLRR</sequence>
<protein>
    <recommendedName>
        <fullName evidence="1">Small ribosomal subunit protein uS15</fullName>
    </recommendedName>
    <alternativeName>
        <fullName evidence="2">30S ribosomal protein S15</fullName>
    </alternativeName>
</protein>
<keyword id="KW-0687">Ribonucleoprotein</keyword>
<keyword id="KW-0689">Ribosomal protein</keyword>
<keyword id="KW-0694">RNA-binding</keyword>
<keyword id="KW-0699">rRNA-binding</keyword>
<dbReference type="EMBL" id="BA000012">
    <property type="protein sequence ID" value="BAB51988.1"/>
    <property type="molecule type" value="Genomic_DNA"/>
</dbReference>
<dbReference type="RefSeq" id="WP_010913326.1">
    <property type="nucleotide sequence ID" value="NC_002678.2"/>
</dbReference>
<dbReference type="SMR" id="Q98BI4"/>
<dbReference type="KEGG" id="mlo:msr5561"/>
<dbReference type="PATRIC" id="fig|266835.9.peg.4420"/>
<dbReference type="eggNOG" id="COG0184">
    <property type="taxonomic scope" value="Bacteria"/>
</dbReference>
<dbReference type="HOGENOM" id="CLU_148518_0_0_5"/>
<dbReference type="Proteomes" id="UP000000552">
    <property type="component" value="Chromosome"/>
</dbReference>
<dbReference type="GO" id="GO:0022627">
    <property type="term" value="C:cytosolic small ribosomal subunit"/>
    <property type="evidence" value="ECO:0007669"/>
    <property type="project" value="TreeGrafter"/>
</dbReference>
<dbReference type="GO" id="GO:0019843">
    <property type="term" value="F:rRNA binding"/>
    <property type="evidence" value="ECO:0007669"/>
    <property type="project" value="UniProtKB-UniRule"/>
</dbReference>
<dbReference type="GO" id="GO:0003735">
    <property type="term" value="F:structural constituent of ribosome"/>
    <property type="evidence" value="ECO:0007669"/>
    <property type="project" value="InterPro"/>
</dbReference>
<dbReference type="GO" id="GO:0006412">
    <property type="term" value="P:translation"/>
    <property type="evidence" value="ECO:0007669"/>
    <property type="project" value="UniProtKB-UniRule"/>
</dbReference>
<dbReference type="CDD" id="cd00353">
    <property type="entry name" value="Ribosomal_S15p_S13e"/>
    <property type="match status" value="1"/>
</dbReference>
<dbReference type="FunFam" id="1.10.287.10:FF:000002">
    <property type="entry name" value="30S ribosomal protein S15"/>
    <property type="match status" value="1"/>
</dbReference>
<dbReference type="Gene3D" id="6.10.250.3130">
    <property type="match status" value="1"/>
</dbReference>
<dbReference type="Gene3D" id="1.10.287.10">
    <property type="entry name" value="S15/NS1, RNA-binding"/>
    <property type="match status" value="1"/>
</dbReference>
<dbReference type="HAMAP" id="MF_01343_B">
    <property type="entry name" value="Ribosomal_uS15_B"/>
    <property type="match status" value="1"/>
</dbReference>
<dbReference type="InterPro" id="IPR000589">
    <property type="entry name" value="Ribosomal_uS15"/>
</dbReference>
<dbReference type="InterPro" id="IPR005290">
    <property type="entry name" value="Ribosomal_uS15_bac-type"/>
</dbReference>
<dbReference type="InterPro" id="IPR009068">
    <property type="entry name" value="uS15_NS1_RNA-bd_sf"/>
</dbReference>
<dbReference type="NCBIfam" id="TIGR00952">
    <property type="entry name" value="S15_bact"/>
    <property type="match status" value="1"/>
</dbReference>
<dbReference type="PANTHER" id="PTHR23321">
    <property type="entry name" value="RIBOSOMAL PROTEIN S15, BACTERIAL AND ORGANELLAR"/>
    <property type="match status" value="1"/>
</dbReference>
<dbReference type="PANTHER" id="PTHR23321:SF26">
    <property type="entry name" value="SMALL RIBOSOMAL SUBUNIT PROTEIN US15M"/>
    <property type="match status" value="1"/>
</dbReference>
<dbReference type="Pfam" id="PF00312">
    <property type="entry name" value="Ribosomal_S15"/>
    <property type="match status" value="1"/>
</dbReference>
<dbReference type="SMART" id="SM01387">
    <property type="entry name" value="Ribosomal_S15"/>
    <property type="match status" value="1"/>
</dbReference>
<dbReference type="SUPFAM" id="SSF47060">
    <property type="entry name" value="S15/NS1 RNA-binding domain"/>
    <property type="match status" value="1"/>
</dbReference>
<dbReference type="PROSITE" id="PS00362">
    <property type="entry name" value="RIBOSOMAL_S15"/>
    <property type="match status" value="1"/>
</dbReference>
<proteinExistence type="inferred from homology"/>
<name>RS15_RHILO</name>
<gene>
    <name evidence="1" type="primary">rpsO</name>
    <name type="ordered locus">msr5561</name>
</gene>
<accession>Q98BI4</accession>
<feature type="chain" id="PRO_0000115520" description="Small ribosomal subunit protein uS15">
    <location>
        <begin position="1"/>
        <end position="89"/>
    </location>
</feature>
<reference key="1">
    <citation type="journal article" date="2000" name="DNA Res.">
        <title>Complete genome structure of the nitrogen-fixing symbiotic bacterium Mesorhizobium loti.</title>
        <authorList>
            <person name="Kaneko T."/>
            <person name="Nakamura Y."/>
            <person name="Sato S."/>
            <person name="Asamizu E."/>
            <person name="Kato T."/>
            <person name="Sasamoto S."/>
            <person name="Watanabe A."/>
            <person name="Idesawa K."/>
            <person name="Ishikawa A."/>
            <person name="Kawashima K."/>
            <person name="Kimura T."/>
            <person name="Kishida Y."/>
            <person name="Kiyokawa C."/>
            <person name="Kohara M."/>
            <person name="Matsumoto M."/>
            <person name="Matsuno A."/>
            <person name="Mochizuki Y."/>
            <person name="Nakayama S."/>
            <person name="Nakazaki N."/>
            <person name="Shimpo S."/>
            <person name="Sugimoto M."/>
            <person name="Takeuchi C."/>
            <person name="Yamada M."/>
            <person name="Tabata S."/>
        </authorList>
    </citation>
    <scope>NUCLEOTIDE SEQUENCE [LARGE SCALE GENOMIC DNA]</scope>
    <source>
        <strain>LMG 29417 / CECT 9101 / MAFF 303099</strain>
    </source>
</reference>
<organism>
    <name type="scientific">Mesorhizobium japonicum (strain LMG 29417 / CECT 9101 / MAFF 303099)</name>
    <name type="common">Mesorhizobium loti (strain MAFF 303099)</name>
    <dbReference type="NCBI Taxonomy" id="266835"/>
    <lineage>
        <taxon>Bacteria</taxon>
        <taxon>Pseudomonadati</taxon>
        <taxon>Pseudomonadota</taxon>
        <taxon>Alphaproteobacteria</taxon>
        <taxon>Hyphomicrobiales</taxon>
        <taxon>Phyllobacteriaceae</taxon>
        <taxon>Mesorhizobium</taxon>
    </lineage>
</organism>